<keyword id="KW-1043">Host membrane</keyword>
<keyword id="KW-0472">Membrane</keyword>
<keyword id="KW-1185">Reference proteome</keyword>
<keyword id="KW-0812">Transmembrane</keyword>
<keyword id="KW-1133">Transmembrane helix</keyword>
<proteinExistence type="predicted"/>
<name>Y083_AFV2P</name>
<reference key="1">
    <citation type="journal article" date="2005" name="J. Bacteriol.">
        <title>Structure and genome organization of AFV2, a novel archaeal lipothrixvirus with unusual terminal and core structures.</title>
        <authorList>
            <person name="Haring M."/>
            <person name="Vestergaard G."/>
            <person name="Brugger K."/>
            <person name="Rachel R."/>
            <person name="Garrett R.A."/>
            <person name="Prangishvili D."/>
        </authorList>
    </citation>
    <scope>NUCLEOTIDE SEQUENCE [GENOMIC DNA]</scope>
</reference>
<comment type="subcellular location">
    <subcellularLocation>
        <location evidence="2">Host membrane</location>
        <topology evidence="2">Single-pass membrane protein</topology>
    </subcellularLocation>
</comment>
<organismHost>
    <name type="scientific">Acidianus sp. F28</name>
    <dbReference type="NCBI Taxonomy" id="315458"/>
</organismHost>
<accession>Q573F1</accession>
<dbReference type="EMBL" id="AJ854042">
    <property type="protein sequence ID" value="CAH69405.1"/>
    <property type="molecule type" value="Genomic_DNA"/>
</dbReference>
<dbReference type="RefSeq" id="YP_001496943.1">
    <property type="nucleotide sequence ID" value="NC_009884.1"/>
</dbReference>
<dbReference type="KEGG" id="vg:5656102"/>
<dbReference type="Proteomes" id="UP000006364">
    <property type="component" value="Genome"/>
</dbReference>
<dbReference type="GO" id="GO:0033644">
    <property type="term" value="C:host cell membrane"/>
    <property type="evidence" value="ECO:0007669"/>
    <property type="project" value="UniProtKB-SubCell"/>
</dbReference>
<dbReference type="GO" id="GO:0016020">
    <property type="term" value="C:membrane"/>
    <property type="evidence" value="ECO:0007669"/>
    <property type="project" value="UniProtKB-KW"/>
</dbReference>
<gene>
    <name type="ORF">ORF83</name>
</gene>
<feature type="chain" id="PRO_0000384493" description="Uncharacterized protein ORF83">
    <location>
        <begin position="1"/>
        <end position="83"/>
    </location>
</feature>
<feature type="transmembrane region" description="Helical" evidence="1">
    <location>
        <begin position="24"/>
        <end position="44"/>
    </location>
</feature>
<evidence type="ECO:0000255" key="1"/>
<evidence type="ECO:0000305" key="2"/>
<organism>
    <name type="scientific">Acidianus filamentous virus 2 (isolate Italy/Pozzuoli)</name>
    <name type="common">AFV-2</name>
    <dbReference type="NCBI Taxonomy" id="654910"/>
    <lineage>
        <taxon>Viruses</taxon>
        <taxon>Adnaviria</taxon>
        <taxon>Zilligvirae</taxon>
        <taxon>Taleaviricota</taxon>
        <taxon>Tokiviricetes</taxon>
        <taxon>Ligamenvirales</taxon>
        <taxon>Lipothrixviridae</taxon>
        <taxon>Deltalipothrixvirus</taxon>
        <taxon>Acidianus filamentous virus 2</taxon>
    </lineage>
</organism>
<protein>
    <recommendedName>
        <fullName>Uncharacterized protein ORF83</fullName>
    </recommendedName>
</protein>
<sequence>MVKQIQSSDKENYDLLLLLPNVYAMTLLIITNTLLIILSYSVLLNNDVLLTLTTIRNIPISIAPTMAIESTIVSSTSLITTSP</sequence>